<proteinExistence type="inferred from homology"/>
<sequence>MTNKVRTRFAPSPTGYMHVGNLRTALYAYLIAKHDNGDFILRIEDTDQERLVEGALDVIYNTLKITGLSHDEGPDIGGPVGPYVQSERRNIYIEYAEKLIEKGEAYYCFCSKERLDMLRANSEALKRPFRYDKHCIDLSKEEIDKKIAEGVPYVIRQKNPTTGSTSFHDEIYGDISVDNSELDDMILIKSDGLPTYNFANVVDDHLMGITHVVRGSEYLSSSPKYNRLYEAFGWDVPIYVHCPPIMKDEHHKLSKRNGDASFEDLMAKGYLKEAILNYIALLGWNPGGEKEVFSMEELIEAFNYRNINKAPAVFDTKKLKWMNGEYIRALSLDKFHEMALPYYEEALTRDLDTKKISELLHTRVEVLNEIPEQLDFFNNLLEYSPEMYIHKKMKTTYENSLKSLEEVLPKLEALENWTFENIKEVCMNLVKELEVKNGVVLWPIRTAVSGKQFTPGGAFEIADILGKEETLERIKIGIDKLKALQ</sequence>
<reference key="1">
    <citation type="journal article" date="2007" name="Genome Res.">
        <title>Genome sequence of a proteolytic (Group I) Clostridium botulinum strain Hall A and comparative analysis of the clostridial genomes.</title>
        <authorList>
            <person name="Sebaihia M."/>
            <person name="Peck M.W."/>
            <person name="Minton N.P."/>
            <person name="Thomson N.R."/>
            <person name="Holden M.T.G."/>
            <person name="Mitchell W.J."/>
            <person name="Carter A.T."/>
            <person name="Bentley S.D."/>
            <person name="Mason D.R."/>
            <person name="Crossman L."/>
            <person name="Paul C.J."/>
            <person name="Ivens A."/>
            <person name="Wells-Bennik M.H.J."/>
            <person name="Davis I.J."/>
            <person name="Cerdeno-Tarraga A.M."/>
            <person name="Churcher C."/>
            <person name="Quail M.A."/>
            <person name="Chillingworth T."/>
            <person name="Feltwell T."/>
            <person name="Fraser A."/>
            <person name="Goodhead I."/>
            <person name="Hance Z."/>
            <person name="Jagels K."/>
            <person name="Larke N."/>
            <person name="Maddison M."/>
            <person name="Moule S."/>
            <person name="Mungall K."/>
            <person name="Norbertczak H."/>
            <person name="Rabbinowitsch E."/>
            <person name="Sanders M."/>
            <person name="Simmonds M."/>
            <person name="White B."/>
            <person name="Whithead S."/>
            <person name="Parkhill J."/>
        </authorList>
    </citation>
    <scope>NUCLEOTIDE SEQUENCE [LARGE SCALE GENOMIC DNA]</scope>
    <source>
        <strain>Hall / ATCC 3502 / NCTC 13319 / Type A</strain>
    </source>
</reference>
<reference key="2">
    <citation type="journal article" date="2007" name="PLoS ONE">
        <title>Analysis of the neurotoxin complex genes in Clostridium botulinum A1-A4 and B1 strains: BoNT/A3, /Ba4 and /B1 clusters are located within plasmids.</title>
        <authorList>
            <person name="Smith T.J."/>
            <person name="Hill K.K."/>
            <person name="Foley B.T."/>
            <person name="Detter J.C."/>
            <person name="Munk A.C."/>
            <person name="Bruce D.C."/>
            <person name="Doggett N.A."/>
            <person name="Smith L.A."/>
            <person name="Marks J.D."/>
            <person name="Xie G."/>
            <person name="Brettin T.S."/>
        </authorList>
    </citation>
    <scope>NUCLEOTIDE SEQUENCE [LARGE SCALE GENOMIC DNA]</scope>
    <source>
        <strain>Hall / ATCC 3502 / NCTC 13319 / Type A</strain>
    </source>
</reference>
<organism>
    <name type="scientific">Clostridium botulinum (strain Hall / ATCC 3502 / NCTC 13319 / Type A)</name>
    <dbReference type="NCBI Taxonomy" id="441771"/>
    <lineage>
        <taxon>Bacteria</taxon>
        <taxon>Bacillati</taxon>
        <taxon>Bacillota</taxon>
        <taxon>Clostridia</taxon>
        <taxon>Eubacteriales</taxon>
        <taxon>Clostridiaceae</taxon>
        <taxon>Clostridium</taxon>
    </lineage>
</organism>
<dbReference type="EC" id="6.1.1.17" evidence="1"/>
<dbReference type="EMBL" id="CP000727">
    <property type="protein sequence ID" value="ABS38569.1"/>
    <property type="molecule type" value="Genomic_DNA"/>
</dbReference>
<dbReference type="EMBL" id="AM412317">
    <property type="protein sequence ID" value="CAL82647.1"/>
    <property type="molecule type" value="Genomic_DNA"/>
</dbReference>
<dbReference type="RefSeq" id="WP_003356788.1">
    <property type="nucleotide sequence ID" value="NC_009698.1"/>
</dbReference>
<dbReference type="RefSeq" id="YP_001253623.1">
    <property type="nucleotide sequence ID" value="NC_009495.1"/>
</dbReference>
<dbReference type="RefSeq" id="YP_001387013.1">
    <property type="nucleotide sequence ID" value="NC_009698.1"/>
</dbReference>
<dbReference type="SMR" id="A5I0T6"/>
<dbReference type="GeneID" id="5187077"/>
<dbReference type="KEGG" id="cbh:CLC_1146"/>
<dbReference type="KEGG" id="cbo:CBO1094"/>
<dbReference type="PATRIC" id="fig|413999.7.peg.1088"/>
<dbReference type="HOGENOM" id="CLU_015768_6_3_9"/>
<dbReference type="PRO" id="PR:A5I0T6"/>
<dbReference type="Proteomes" id="UP000001986">
    <property type="component" value="Chromosome"/>
</dbReference>
<dbReference type="GO" id="GO:0005829">
    <property type="term" value="C:cytosol"/>
    <property type="evidence" value="ECO:0000318"/>
    <property type="project" value="GO_Central"/>
</dbReference>
<dbReference type="GO" id="GO:0005524">
    <property type="term" value="F:ATP binding"/>
    <property type="evidence" value="ECO:0007669"/>
    <property type="project" value="UniProtKB-UniRule"/>
</dbReference>
<dbReference type="GO" id="GO:0004818">
    <property type="term" value="F:glutamate-tRNA ligase activity"/>
    <property type="evidence" value="ECO:0007669"/>
    <property type="project" value="UniProtKB-UniRule"/>
</dbReference>
<dbReference type="GO" id="GO:0004819">
    <property type="term" value="F:glutamine-tRNA ligase activity"/>
    <property type="evidence" value="ECO:0000318"/>
    <property type="project" value="GO_Central"/>
</dbReference>
<dbReference type="GO" id="GO:0000049">
    <property type="term" value="F:tRNA binding"/>
    <property type="evidence" value="ECO:0007669"/>
    <property type="project" value="InterPro"/>
</dbReference>
<dbReference type="GO" id="GO:0008270">
    <property type="term" value="F:zinc ion binding"/>
    <property type="evidence" value="ECO:0007669"/>
    <property type="project" value="UniProtKB-UniRule"/>
</dbReference>
<dbReference type="GO" id="GO:0006425">
    <property type="term" value="P:glutaminyl-tRNA aminoacylation"/>
    <property type="evidence" value="ECO:0000318"/>
    <property type="project" value="GO_Central"/>
</dbReference>
<dbReference type="GO" id="GO:0006424">
    <property type="term" value="P:glutamyl-tRNA aminoacylation"/>
    <property type="evidence" value="ECO:0007669"/>
    <property type="project" value="UniProtKB-UniRule"/>
</dbReference>
<dbReference type="CDD" id="cd00808">
    <property type="entry name" value="GluRS_core"/>
    <property type="match status" value="1"/>
</dbReference>
<dbReference type="FunFam" id="3.40.50.620:FF:000045">
    <property type="entry name" value="Glutamate--tRNA ligase, mitochondrial"/>
    <property type="match status" value="1"/>
</dbReference>
<dbReference type="Gene3D" id="1.10.10.350">
    <property type="match status" value="1"/>
</dbReference>
<dbReference type="Gene3D" id="3.40.50.620">
    <property type="entry name" value="HUPs"/>
    <property type="match status" value="1"/>
</dbReference>
<dbReference type="HAMAP" id="MF_00022">
    <property type="entry name" value="Glu_tRNA_synth_type1"/>
    <property type="match status" value="1"/>
</dbReference>
<dbReference type="InterPro" id="IPR045462">
    <property type="entry name" value="aa-tRNA-synth_I_cd-bd"/>
</dbReference>
<dbReference type="InterPro" id="IPR020751">
    <property type="entry name" value="aa-tRNA-synth_I_codon-bd_sub2"/>
</dbReference>
<dbReference type="InterPro" id="IPR001412">
    <property type="entry name" value="aa-tRNA-synth_I_CS"/>
</dbReference>
<dbReference type="InterPro" id="IPR008925">
    <property type="entry name" value="aa_tRNA-synth_I_cd-bd_sf"/>
</dbReference>
<dbReference type="InterPro" id="IPR004527">
    <property type="entry name" value="Glu-tRNA-ligase_bac/mito"/>
</dbReference>
<dbReference type="InterPro" id="IPR000924">
    <property type="entry name" value="Glu/Gln-tRNA-synth"/>
</dbReference>
<dbReference type="InterPro" id="IPR020058">
    <property type="entry name" value="Glu/Gln-tRNA-synth_Ib_cat-dom"/>
</dbReference>
<dbReference type="InterPro" id="IPR049940">
    <property type="entry name" value="GluQ/Sye"/>
</dbReference>
<dbReference type="InterPro" id="IPR033910">
    <property type="entry name" value="GluRS_core"/>
</dbReference>
<dbReference type="InterPro" id="IPR014729">
    <property type="entry name" value="Rossmann-like_a/b/a_fold"/>
</dbReference>
<dbReference type="NCBIfam" id="TIGR00464">
    <property type="entry name" value="gltX_bact"/>
    <property type="match status" value="1"/>
</dbReference>
<dbReference type="PANTHER" id="PTHR43311">
    <property type="entry name" value="GLUTAMATE--TRNA LIGASE"/>
    <property type="match status" value="1"/>
</dbReference>
<dbReference type="PANTHER" id="PTHR43311:SF2">
    <property type="entry name" value="GLUTAMATE--TRNA LIGASE, MITOCHONDRIAL-RELATED"/>
    <property type="match status" value="1"/>
</dbReference>
<dbReference type="Pfam" id="PF19269">
    <property type="entry name" value="Anticodon_2"/>
    <property type="match status" value="1"/>
</dbReference>
<dbReference type="Pfam" id="PF00749">
    <property type="entry name" value="tRNA-synt_1c"/>
    <property type="match status" value="1"/>
</dbReference>
<dbReference type="PRINTS" id="PR00987">
    <property type="entry name" value="TRNASYNTHGLU"/>
</dbReference>
<dbReference type="SUPFAM" id="SSF48163">
    <property type="entry name" value="An anticodon-binding domain of class I aminoacyl-tRNA synthetases"/>
    <property type="match status" value="1"/>
</dbReference>
<dbReference type="SUPFAM" id="SSF52374">
    <property type="entry name" value="Nucleotidylyl transferase"/>
    <property type="match status" value="1"/>
</dbReference>
<dbReference type="PROSITE" id="PS00178">
    <property type="entry name" value="AA_TRNA_LIGASE_I"/>
    <property type="match status" value="1"/>
</dbReference>
<keyword id="KW-0030">Aminoacyl-tRNA synthetase</keyword>
<keyword id="KW-0067">ATP-binding</keyword>
<keyword id="KW-0963">Cytoplasm</keyword>
<keyword id="KW-0436">Ligase</keyword>
<keyword id="KW-0479">Metal-binding</keyword>
<keyword id="KW-0547">Nucleotide-binding</keyword>
<keyword id="KW-0648">Protein biosynthesis</keyword>
<keyword id="KW-1185">Reference proteome</keyword>
<keyword id="KW-0862">Zinc</keyword>
<gene>
    <name evidence="1" type="primary">gltX</name>
    <name type="ordered locus">CBO1094</name>
    <name type="ordered locus">CLC_1146</name>
</gene>
<accession>A5I0T6</accession>
<accession>A7G2J8</accession>
<feature type="chain" id="PRO_0000330962" description="Glutamate--tRNA ligase">
    <location>
        <begin position="1"/>
        <end position="485"/>
    </location>
</feature>
<feature type="short sequence motif" description="'HIGH' region" evidence="1">
    <location>
        <begin position="11"/>
        <end position="21"/>
    </location>
</feature>
<feature type="short sequence motif" description="'KMSKS' region" evidence="1">
    <location>
        <begin position="252"/>
        <end position="256"/>
    </location>
</feature>
<feature type="binding site" evidence="1">
    <location>
        <position position="108"/>
    </location>
    <ligand>
        <name>Zn(2+)</name>
        <dbReference type="ChEBI" id="CHEBI:29105"/>
    </ligand>
</feature>
<feature type="binding site" evidence="1">
    <location>
        <position position="110"/>
    </location>
    <ligand>
        <name>Zn(2+)</name>
        <dbReference type="ChEBI" id="CHEBI:29105"/>
    </ligand>
</feature>
<feature type="binding site" evidence="1">
    <location>
        <position position="135"/>
    </location>
    <ligand>
        <name>Zn(2+)</name>
        <dbReference type="ChEBI" id="CHEBI:29105"/>
    </ligand>
</feature>
<feature type="binding site" evidence="1">
    <location>
        <position position="137"/>
    </location>
    <ligand>
        <name>Zn(2+)</name>
        <dbReference type="ChEBI" id="CHEBI:29105"/>
    </ligand>
</feature>
<feature type="binding site" evidence="1">
    <location>
        <position position="255"/>
    </location>
    <ligand>
        <name>ATP</name>
        <dbReference type="ChEBI" id="CHEBI:30616"/>
    </ligand>
</feature>
<comment type="function">
    <text evidence="1">Catalyzes the attachment of glutamate to tRNA(Glu) in a two-step reaction: glutamate is first activated by ATP to form Glu-AMP and then transferred to the acceptor end of tRNA(Glu).</text>
</comment>
<comment type="catalytic activity">
    <reaction evidence="1">
        <text>tRNA(Glu) + L-glutamate + ATP = L-glutamyl-tRNA(Glu) + AMP + diphosphate</text>
        <dbReference type="Rhea" id="RHEA:23540"/>
        <dbReference type="Rhea" id="RHEA-COMP:9663"/>
        <dbReference type="Rhea" id="RHEA-COMP:9680"/>
        <dbReference type="ChEBI" id="CHEBI:29985"/>
        <dbReference type="ChEBI" id="CHEBI:30616"/>
        <dbReference type="ChEBI" id="CHEBI:33019"/>
        <dbReference type="ChEBI" id="CHEBI:78442"/>
        <dbReference type="ChEBI" id="CHEBI:78520"/>
        <dbReference type="ChEBI" id="CHEBI:456215"/>
        <dbReference type="EC" id="6.1.1.17"/>
    </reaction>
</comment>
<comment type="cofactor">
    <cofactor evidence="1">
        <name>Zn(2+)</name>
        <dbReference type="ChEBI" id="CHEBI:29105"/>
    </cofactor>
    <text evidence="1">Binds 1 zinc ion per subunit.</text>
</comment>
<comment type="subunit">
    <text evidence="1">Monomer.</text>
</comment>
<comment type="subcellular location">
    <subcellularLocation>
        <location evidence="1">Cytoplasm</location>
    </subcellularLocation>
</comment>
<comment type="similarity">
    <text evidence="1">Belongs to the class-I aminoacyl-tRNA synthetase family. Glutamate--tRNA ligase type 1 subfamily.</text>
</comment>
<evidence type="ECO:0000255" key="1">
    <source>
        <dbReference type="HAMAP-Rule" id="MF_00022"/>
    </source>
</evidence>
<name>SYE_CLOBH</name>
<protein>
    <recommendedName>
        <fullName evidence="1">Glutamate--tRNA ligase</fullName>
        <ecNumber evidence="1">6.1.1.17</ecNumber>
    </recommendedName>
    <alternativeName>
        <fullName evidence="1">Glutamyl-tRNA synthetase</fullName>
        <shortName evidence="1">GluRS</shortName>
    </alternativeName>
</protein>